<name>ATG8H_ARATH</name>
<dbReference type="EMBL" id="AB073182">
    <property type="protein sequence ID" value="BAB88394.1"/>
    <property type="molecule type" value="mRNA"/>
</dbReference>
<dbReference type="EMBL" id="AC011623">
    <property type="protein sequence ID" value="AAF08574.1"/>
    <property type="status" value="ALT_SEQ"/>
    <property type="molecule type" value="Genomic_DNA"/>
</dbReference>
<dbReference type="EMBL" id="CP002686">
    <property type="protein sequence ID" value="AEE74390.1"/>
    <property type="molecule type" value="Genomic_DNA"/>
</dbReference>
<dbReference type="EMBL" id="AK175289">
    <property type="protein sequence ID" value="BAD43052.1"/>
    <property type="molecule type" value="mRNA"/>
</dbReference>
<dbReference type="EMBL" id="AK176187">
    <property type="protein sequence ID" value="BAD43950.1"/>
    <property type="molecule type" value="mRNA"/>
</dbReference>
<dbReference type="EMBL" id="AK176657">
    <property type="protein sequence ID" value="BAD44420.1"/>
    <property type="molecule type" value="mRNA"/>
</dbReference>
<dbReference type="EMBL" id="BT024566">
    <property type="protein sequence ID" value="ABD38905.1"/>
    <property type="molecule type" value="mRNA"/>
</dbReference>
<dbReference type="EMBL" id="AY085270">
    <property type="protein sequence ID" value="AAM62502.1"/>
    <property type="molecule type" value="mRNA"/>
</dbReference>
<dbReference type="RefSeq" id="NP_566283.1">
    <property type="nucleotide sequence ID" value="NM_111517.3"/>
</dbReference>
<dbReference type="SMR" id="Q8S925"/>
<dbReference type="FunCoup" id="Q8S925">
    <property type="interactions" value="1"/>
</dbReference>
<dbReference type="STRING" id="3702.Q8S925"/>
<dbReference type="iPTMnet" id="Q8S925"/>
<dbReference type="PaxDb" id="3702-AT3G06420.1"/>
<dbReference type="ProteomicsDB" id="246740"/>
<dbReference type="EnsemblPlants" id="AT3G06420.1">
    <property type="protein sequence ID" value="AT3G06420.1"/>
    <property type="gene ID" value="AT3G06420"/>
</dbReference>
<dbReference type="GeneID" id="819816"/>
<dbReference type="Gramene" id="AT3G06420.1">
    <property type="protein sequence ID" value="AT3G06420.1"/>
    <property type="gene ID" value="AT3G06420"/>
</dbReference>
<dbReference type="KEGG" id="ath:AT3G06420"/>
<dbReference type="Araport" id="AT3G06420"/>
<dbReference type="TAIR" id="AT3G06420">
    <property type="gene designation" value="ATG8H"/>
</dbReference>
<dbReference type="eggNOG" id="KOG1654">
    <property type="taxonomic scope" value="Eukaryota"/>
</dbReference>
<dbReference type="HOGENOM" id="CLU_119276_0_1_1"/>
<dbReference type="InParanoid" id="Q8S925"/>
<dbReference type="OMA" id="YADRCKE"/>
<dbReference type="OrthoDB" id="6738456at2759"/>
<dbReference type="PhylomeDB" id="Q8S925"/>
<dbReference type="PRO" id="PR:Q8S925"/>
<dbReference type="Proteomes" id="UP000006548">
    <property type="component" value="Chromosome 3"/>
</dbReference>
<dbReference type="ExpressionAtlas" id="Q8S925">
    <property type="expression patterns" value="baseline and differential"/>
</dbReference>
<dbReference type="GO" id="GO:0005776">
    <property type="term" value="C:autophagosome"/>
    <property type="evidence" value="ECO:0000314"/>
    <property type="project" value="TAIR"/>
</dbReference>
<dbReference type="GO" id="GO:0000421">
    <property type="term" value="C:autophagosome membrane"/>
    <property type="evidence" value="ECO:0007669"/>
    <property type="project" value="UniProtKB-SubCell"/>
</dbReference>
<dbReference type="GO" id="GO:0031410">
    <property type="term" value="C:cytoplasmic vesicle"/>
    <property type="evidence" value="ECO:0007669"/>
    <property type="project" value="UniProtKB-KW"/>
</dbReference>
<dbReference type="GO" id="GO:0005874">
    <property type="term" value="C:microtubule"/>
    <property type="evidence" value="ECO:0007669"/>
    <property type="project" value="UniProtKB-KW"/>
</dbReference>
<dbReference type="GO" id="GO:0006914">
    <property type="term" value="P:autophagy"/>
    <property type="evidence" value="ECO:0007669"/>
    <property type="project" value="UniProtKB-KW"/>
</dbReference>
<dbReference type="GO" id="GO:0015031">
    <property type="term" value="P:protein transport"/>
    <property type="evidence" value="ECO:0007669"/>
    <property type="project" value="UniProtKB-KW"/>
</dbReference>
<dbReference type="FunFam" id="3.10.20.90:FF:000235">
    <property type="entry name" value="Autophagy-related protein"/>
    <property type="match status" value="1"/>
</dbReference>
<dbReference type="Gene3D" id="3.10.20.90">
    <property type="entry name" value="Phosphatidylinositol 3-kinase Catalytic Subunit, Chain A, domain 1"/>
    <property type="match status" value="1"/>
</dbReference>
<dbReference type="InterPro" id="IPR004241">
    <property type="entry name" value="Atg8-like"/>
</dbReference>
<dbReference type="InterPro" id="IPR029071">
    <property type="entry name" value="Ubiquitin-like_domsf"/>
</dbReference>
<dbReference type="PANTHER" id="PTHR10969">
    <property type="entry name" value="MICROTUBULE-ASSOCIATED PROTEINS 1A/1B LIGHT CHAIN 3-RELATED"/>
    <property type="match status" value="1"/>
</dbReference>
<dbReference type="Pfam" id="PF02991">
    <property type="entry name" value="ATG8"/>
    <property type="match status" value="1"/>
</dbReference>
<dbReference type="SUPFAM" id="SSF54236">
    <property type="entry name" value="Ubiquitin-like"/>
    <property type="match status" value="1"/>
</dbReference>
<evidence type="ECO:0000250" key="1">
    <source>
        <dbReference type="UniProtKB" id="P38182"/>
    </source>
</evidence>
<evidence type="ECO:0000250" key="2">
    <source>
        <dbReference type="UniProtKB" id="Q8LEM4"/>
    </source>
</evidence>
<evidence type="ECO:0000250" key="3">
    <source>
        <dbReference type="UniProtKB" id="Q9SL04"/>
    </source>
</evidence>
<evidence type="ECO:0000269" key="4">
    <source>
    </source>
</evidence>
<evidence type="ECO:0000269" key="5">
    <source>
    </source>
</evidence>
<evidence type="ECO:0000269" key="6">
    <source>
    </source>
</evidence>
<evidence type="ECO:0000305" key="7"/>
<keyword id="KW-0072">Autophagy</keyword>
<keyword id="KW-0963">Cytoplasm</keyword>
<keyword id="KW-0968">Cytoplasmic vesicle</keyword>
<keyword id="KW-0206">Cytoskeleton</keyword>
<keyword id="KW-0449">Lipoprotein</keyword>
<keyword id="KW-0472">Membrane</keyword>
<keyword id="KW-0493">Microtubule</keyword>
<keyword id="KW-0653">Protein transport</keyword>
<keyword id="KW-1185">Reference proteome</keyword>
<keyword id="KW-0813">Transport</keyword>
<keyword id="KW-0833">Ubl conjugation pathway</keyword>
<keyword id="KW-0926">Vacuole</keyword>
<accession>Q8S925</accession>
<accession>Q9SQU5</accession>
<protein>
    <recommendedName>
        <fullName>Autophagy-related protein 8h</fullName>
    </recommendedName>
    <alternativeName>
        <fullName>Autophagy-related ubiquitin-like modifier ATG8h</fullName>
        <shortName>AtAPG8h</shortName>
        <shortName>Protein autophagy 8h</shortName>
    </alternativeName>
</protein>
<organism>
    <name type="scientific">Arabidopsis thaliana</name>
    <name type="common">Mouse-ear cress</name>
    <dbReference type="NCBI Taxonomy" id="3702"/>
    <lineage>
        <taxon>Eukaryota</taxon>
        <taxon>Viridiplantae</taxon>
        <taxon>Streptophyta</taxon>
        <taxon>Embryophyta</taxon>
        <taxon>Tracheophyta</taxon>
        <taxon>Spermatophyta</taxon>
        <taxon>Magnoliopsida</taxon>
        <taxon>eudicotyledons</taxon>
        <taxon>Gunneridae</taxon>
        <taxon>Pentapetalae</taxon>
        <taxon>rosids</taxon>
        <taxon>malvids</taxon>
        <taxon>Brassicales</taxon>
        <taxon>Brassicaceae</taxon>
        <taxon>Camelineae</taxon>
        <taxon>Arabidopsis</taxon>
    </lineage>
</organism>
<feature type="chain" id="PRO_0000286919" description="Autophagy-related protein 8h">
    <location>
        <begin position="1"/>
        <end position="119"/>
    </location>
</feature>
<feature type="lipid moiety-binding region" description="Phosphatidylethanolamine amidated glycine" evidence="1">
    <location>
        <position position="119"/>
    </location>
</feature>
<proteinExistence type="evidence at protein level"/>
<gene>
    <name type="primary">ATG8H</name>
    <name type="synonym">APG8H</name>
    <name type="ordered locus">At3g06420</name>
    <name type="ORF">F24P17.11</name>
</gene>
<comment type="function">
    <text evidence="1">Ubiquitin-like modifier involved in autophagosomes formation. May mediate the delivery of the autophagosomes to the vacuole via the microtubule cytoskeleton.</text>
</comment>
<comment type="subunit">
    <text evidence="3 6">Interacts with ATG4 (By similarity). Interacts with ATI1 (PubMed:22580699).</text>
</comment>
<comment type="subcellular location">
    <subcellularLocation>
        <location evidence="1">Cytoplasmic vesicle</location>
        <location evidence="1">Autophagosome membrane</location>
        <topology evidence="1">Lipid-anchor</topology>
    </subcellularLocation>
    <subcellularLocation>
        <location evidence="1">Vacuole membrane</location>
        <topology evidence="1">Lipid-anchor</topology>
    </subcellularLocation>
    <subcellularLocation>
        <location evidence="2">Cytoplasm</location>
        <location evidence="2">Cytoskeleton</location>
    </subcellularLocation>
</comment>
<comment type="tissue specificity">
    <text evidence="4">Constitutively expressed.</text>
</comment>
<comment type="induction">
    <text evidence="5">Induced by sugar starvation.</text>
</comment>
<comment type="PTM">
    <text evidence="1">Gly-119 forms then a thioester bond with the 'Cys-558' of ATG7 (E1-like activating enzyme) before being transferred to the 'Cys-258' of ATG3 (the specific E2 conjugating enzyme), in order to be finally amidated with phosphatidylethanolamine. This lipid modification anchors ATG8 to autophagosomes.</text>
</comment>
<comment type="similarity">
    <text evidence="7">Belongs to the ATG8 family.</text>
</comment>
<comment type="sequence caution" evidence="7">
    <conflict type="erroneous gene model prediction">
        <sequence resource="EMBL-CDS" id="AAF08574"/>
    </conflict>
</comment>
<reference key="1">
    <citation type="journal article" date="2002" name="Plant Physiol.">
        <title>Leaf senescence and starvation-induced chlorosis are accelerated by the disruption of an Arabidopsis autophagy gene.</title>
        <authorList>
            <person name="Hanaoka H."/>
            <person name="Noda T."/>
            <person name="Shirano Y."/>
            <person name="Kato T."/>
            <person name="Hayashi H."/>
            <person name="Shibata D."/>
            <person name="Tabata S."/>
            <person name="Ohsumi Y."/>
        </authorList>
    </citation>
    <scope>NUCLEOTIDE SEQUENCE [MRNA]</scope>
    <scope>NOMENCLATURE</scope>
    <scope>GENE FAMILY</scope>
</reference>
<reference key="2">
    <citation type="journal article" date="2000" name="Nature">
        <title>Sequence and analysis of chromosome 3 of the plant Arabidopsis thaliana.</title>
        <authorList>
            <person name="Salanoubat M."/>
            <person name="Lemcke K."/>
            <person name="Rieger M."/>
            <person name="Ansorge W."/>
            <person name="Unseld M."/>
            <person name="Fartmann B."/>
            <person name="Valle G."/>
            <person name="Bloecker H."/>
            <person name="Perez-Alonso M."/>
            <person name="Obermaier B."/>
            <person name="Delseny M."/>
            <person name="Boutry M."/>
            <person name="Grivell L.A."/>
            <person name="Mache R."/>
            <person name="Puigdomenech P."/>
            <person name="De Simone V."/>
            <person name="Choisne N."/>
            <person name="Artiguenave F."/>
            <person name="Robert C."/>
            <person name="Brottier P."/>
            <person name="Wincker P."/>
            <person name="Cattolico L."/>
            <person name="Weissenbach J."/>
            <person name="Saurin W."/>
            <person name="Quetier F."/>
            <person name="Schaefer M."/>
            <person name="Mueller-Auer S."/>
            <person name="Gabel C."/>
            <person name="Fuchs M."/>
            <person name="Benes V."/>
            <person name="Wurmbach E."/>
            <person name="Drzonek H."/>
            <person name="Erfle H."/>
            <person name="Jordan N."/>
            <person name="Bangert S."/>
            <person name="Wiedelmann R."/>
            <person name="Kranz H."/>
            <person name="Voss H."/>
            <person name="Holland R."/>
            <person name="Brandt P."/>
            <person name="Nyakatura G."/>
            <person name="Vezzi A."/>
            <person name="D'Angelo M."/>
            <person name="Pallavicini A."/>
            <person name="Toppo S."/>
            <person name="Simionati B."/>
            <person name="Conrad A."/>
            <person name="Hornischer K."/>
            <person name="Kauer G."/>
            <person name="Loehnert T.-H."/>
            <person name="Nordsiek G."/>
            <person name="Reichelt J."/>
            <person name="Scharfe M."/>
            <person name="Schoen O."/>
            <person name="Bargues M."/>
            <person name="Terol J."/>
            <person name="Climent J."/>
            <person name="Navarro P."/>
            <person name="Collado C."/>
            <person name="Perez-Perez A."/>
            <person name="Ottenwaelder B."/>
            <person name="Duchemin D."/>
            <person name="Cooke R."/>
            <person name="Laudie M."/>
            <person name="Berger-Llauro C."/>
            <person name="Purnelle B."/>
            <person name="Masuy D."/>
            <person name="de Haan M."/>
            <person name="Maarse A.C."/>
            <person name="Alcaraz J.-P."/>
            <person name="Cottet A."/>
            <person name="Casacuberta E."/>
            <person name="Monfort A."/>
            <person name="Argiriou A."/>
            <person name="Flores M."/>
            <person name="Liguori R."/>
            <person name="Vitale D."/>
            <person name="Mannhaupt G."/>
            <person name="Haase D."/>
            <person name="Schoof H."/>
            <person name="Rudd S."/>
            <person name="Zaccaria P."/>
            <person name="Mewes H.-W."/>
            <person name="Mayer K.F.X."/>
            <person name="Kaul S."/>
            <person name="Town C.D."/>
            <person name="Koo H.L."/>
            <person name="Tallon L.J."/>
            <person name="Jenkins J."/>
            <person name="Rooney T."/>
            <person name="Rizzo M."/>
            <person name="Walts A."/>
            <person name="Utterback T."/>
            <person name="Fujii C.Y."/>
            <person name="Shea T.P."/>
            <person name="Creasy T.H."/>
            <person name="Haas B."/>
            <person name="Maiti R."/>
            <person name="Wu D."/>
            <person name="Peterson J."/>
            <person name="Van Aken S."/>
            <person name="Pai G."/>
            <person name="Militscher J."/>
            <person name="Sellers P."/>
            <person name="Gill J.E."/>
            <person name="Feldblyum T.V."/>
            <person name="Preuss D."/>
            <person name="Lin X."/>
            <person name="Nierman W.C."/>
            <person name="Salzberg S.L."/>
            <person name="White O."/>
            <person name="Venter J.C."/>
            <person name="Fraser C.M."/>
            <person name="Kaneko T."/>
            <person name="Nakamura Y."/>
            <person name="Sato S."/>
            <person name="Kato T."/>
            <person name="Asamizu E."/>
            <person name="Sasamoto S."/>
            <person name="Kimura T."/>
            <person name="Idesawa K."/>
            <person name="Kawashima K."/>
            <person name="Kishida Y."/>
            <person name="Kiyokawa C."/>
            <person name="Kohara M."/>
            <person name="Matsumoto M."/>
            <person name="Matsuno A."/>
            <person name="Muraki A."/>
            <person name="Nakayama S."/>
            <person name="Nakazaki N."/>
            <person name="Shinpo S."/>
            <person name="Takeuchi C."/>
            <person name="Wada T."/>
            <person name="Watanabe A."/>
            <person name="Yamada M."/>
            <person name="Yasuda M."/>
            <person name="Tabata S."/>
        </authorList>
    </citation>
    <scope>NUCLEOTIDE SEQUENCE [LARGE SCALE GENOMIC DNA]</scope>
    <source>
        <strain>cv. Columbia</strain>
    </source>
</reference>
<reference key="3">
    <citation type="journal article" date="2017" name="Plant J.">
        <title>Araport11: a complete reannotation of the Arabidopsis thaliana reference genome.</title>
        <authorList>
            <person name="Cheng C.Y."/>
            <person name="Krishnakumar V."/>
            <person name="Chan A.P."/>
            <person name="Thibaud-Nissen F."/>
            <person name="Schobel S."/>
            <person name="Town C.D."/>
        </authorList>
    </citation>
    <scope>GENOME REANNOTATION</scope>
    <source>
        <strain>cv. Columbia</strain>
    </source>
</reference>
<reference key="4">
    <citation type="submission" date="2004-09" db="EMBL/GenBank/DDBJ databases">
        <title>Large-scale analysis of RIKEN Arabidopsis full-length (RAFL) cDNAs.</title>
        <authorList>
            <person name="Totoki Y."/>
            <person name="Seki M."/>
            <person name="Ishida J."/>
            <person name="Nakajima M."/>
            <person name="Enju A."/>
            <person name="Kamiya A."/>
            <person name="Narusaka M."/>
            <person name="Shin-i T."/>
            <person name="Nakagawa M."/>
            <person name="Sakamoto N."/>
            <person name="Oishi K."/>
            <person name="Kohara Y."/>
            <person name="Kobayashi M."/>
            <person name="Toyoda A."/>
            <person name="Sakaki Y."/>
            <person name="Sakurai T."/>
            <person name="Iida K."/>
            <person name="Akiyama K."/>
            <person name="Satou M."/>
            <person name="Toyoda T."/>
            <person name="Konagaya A."/>
            <person name="Carninci P."/>
            <person name="Kawai J."/>
            <person name="Hayashizaki Y."/>
            <person name="Shinozaki K."/>
        </authorList>
    </citation>
    <scope>NUCLEOTIDE SEQUENCE [LARGE SCALE MRNA]</scope>
    <source>
        <strain>cv. Columbia</strain>
    </source>
</reference>
<reference key="5">
    <citation type="submission" date="2006-02" db="EMBL/GenBank/DDBJ databases">
        <title>Arabidopsis ORF clones.</title>
        <authorList>
            <person name="Shinn P."/>
            <person name="Chen H."/>
            <person name="Kim C.J."/>
            <person name="Ecker J.R."/>
        </authorList>
    </citation>
    <scope>NUCLEOTIDE SEQUENCE [LARGE SCALE MRNA]</scope>
    <source>
        <strain>cv. Columbia</strain>
    </source>
</reference>
<reference key="6">
    <citation type="submission" date="2002-03" db="EMBL/GenBank/DDBJ databases">
        <title>Full-length cDNA from Arabidopsis thaliana.</title>
        <authorList>
            <person name="Brover V.V."/>
            <person name="Troukhan M.E."/>
            <person name="Alexandrov N.A."/>
            <person name="Lu Y.-P."/>
            <person name="Flavell R.B."/>
            <person name="Feldmann K.A."/>
        </authorList>
    </citation>
    <scope>NUCLEOTIDE SEQUENCE [LARGE SCALE MRNA]</scope>
</reference>
<reference key="7">
    <citation type="journal article" date="2004" name="Plant Cell">
        <title>Processing of ATG8s, ubiquitin-like proteins, and their deconjugation by ATG4s are essential for plant autophagy.</title>
        <authorList>
            <person name="Yoshimoto K."/>
            <person name="Hanaoka H."/>
            <person name="Sato S."/>
            <person name="Kato T."/>
            <person name="Tabata S."/>
            <person name="Noda T."/>
            <person name="Ohsumi Y."/>
        </authorList>
    </citation>
    <scope>TISSUE SPECIFICITY</scope>
</reference>
<reference key="8">
    <citation type="journal article" date="2005" name="J. Exp. Bot.">
        <title>The autophagy-associated Atg8 gene family operates both under favourable growth conditions and under starvation stresses in Arabidopsis plants.</title>
        <authorList>
            <person name="Slavikova S."/>
            <person name="Shy G."/>
            <person name="Yao Y."/>
            <person name="Glozman R."/>
            <person name="Levanony H."/>
            <person name="Pietrokovski S."/>
            <person name="Elazar Z."/>
            <person name="Galili G."/>
        </authorList>
    </citation>
    <scope>INDUCTION</scope>
</reference>
<reference key="9">
    <citation type="journal article" date="2012" name="Plant Signal. Behav.">
        <title>ATI1, a newly identified atg8-interacting protein, binds two different Atg8 homologs.</title>
        <authorList>
            <person name="Avin-Wittenberg T."/>
            <person name="Michaeli S."/>
            <person name="Honig A."/>
            <person name="Galili G."/>
        </authorList>
    </citation>
    <scope>INTERACTION WITH ATI1</scope>
</reference>
<sequence length="119" mass="13884">MGIVVKSFKDQFSSDERLKESNNIIAKYPDRIPVIIEKYSNADLPDMEKNKYLVPRDMTVGHFIHMLSKRMQLDPSKALFVFVHNTLPQTASRMDSLYNTFKEEDGFLYMCYSTEKTFG</sequence>